<evidence type="ECO:0000250" key="1">
    <source>
        <dbReference type="UniProtKB" id="P03583"/>
    </source>
</evidence>
<evidence type="ECO:0000250" key="2">
    <source>
        <dbReference type="UniProtKB" id="P69513"/>
    </source>
</evidence>
<evidence type="ECO:0000256" key="3">
    <source>
        <dbReference type="SAM" id="MobiDB-lite"/>
    </source>
</evidence>
<evidence type="ECO:0000305" key="4"/>
<organismHost>
    <name type="scientific">Capsicum annuum</name>
    <name type="common">Capsicum pepper</name>
    <dbReference type="NCBI Taxonomy" id="4072"/>
</organismHost>
<organismHost>
    <name type="scientific">Eryngium planum</name>
    <dbReference type="NCBI Taxonomy" id="43071"/>
</organismHost>
<organismHost>
    <name type="scientific">Nicotiana glauca</name>
    <name type="common">Glaucous tobacco</name>
    <name type="synonym">Tree tobacco</name>
    <dbReference type="NCBI Taxonomy" id="4090"/>
</organismHost>
<organismHost>
    <name type="scientific">Nicotiana tabacum</name>
    <name type="common">Common tobacco</name>
    <dbReference type="NCBI Taxonomy" id="4097"/>
</organismHost>
<keyword id="KW-1031">Host cell junction</keyword>
<keyword id="KW-1035">Host cytoplasm</keyword>
<keyword id="KW-1037">Host cytoskeleton</keyword>
<keyword id="KW-0694">RNA-binding</keyword>
<keyword id="KW-0813">Transport</keyword>
<keyword id="KW-0916">Viral movement protein</keyword>
<feature type="chain" id="PRO_0000144966" description="Movement protein">
    <location>
        <begin position="1"/>
        <end position="266"/>
    </location>
</feature>
<feature type="region of interest" description="Disordered" evidence="3">
    <location>
        <begin position="212"/>
        <end position="266"/>
    </location>
</feature>
<feature type="compositionally biased region" description="Basic residues" evidence="3">
    <location>
        <begin position="212"/>
        <end position="227"/>
    </location>
</feature>
<feature type="compositionally biased region" description="Low complexity" evidence="3">
    <location>
        <begin position="228"/>
        <end position="242"/>
    </location>
</feature>
<feature type="compositionally biased region" description="Acidic residues" evidence="3">
    <location>
        <begin position="249"/>
        <end position="259"/>
    </location>
</feature>
<feature type="sequence conflict" description="In Ref. 1; AAA47936." evidence="4" ref="1">
    <original>N</original>
    <variation>D</variation>
    <location>
        <position position="16"/>
    </location>
</feature>
<feature type="sequence conflict" description="In Ref. 1; AAA47936." evidence="4" ref="1">
    <original>N</original>
    <variation>K</variation>
    <location>
        <position position="64"/>
    </location>
</feature>
<feature type="sequence conflict" description="In Ref. 1; AAA47936." evidence="4" ref="1">
    <original>G</original>
    <variation>D</variation>
    <location>
        <position position="71"/>
    </location>
</feature>
<feature type="sequence conflict" description="In Ref. 1; AAA47936." evidence="4" ref="1">
    <original>N</original>
    <variation>K</variation>
    <location>
        <position position="101"/>
    </location>
</feature>
<feature type="sequence conflict" description="In Ref. 1; AAA47936." evidence="4" ref="1">
    <original>N</original>
    <variation>H</variation>
    <location>
        <position position="135"/>
    </location>
</feature>
<feature type="sequence conflict" description="In Ref. 1; AAA47936." evidence="4" ref="1">
    <original>K</original>
    <variation>R</variation>
    <location>
        <position position="171"/>
    </location>
</feature>
<feature type="sequence conflict" description="In Ref. 1; AAA47936." evidence="4" ref="1">
    <original>R</original>
    <variation>S</variation>
    <location>
        <position position="180"/>
    </location>
</feature>
<feature type="sequence conflict" description="In Ref. 1; AAA47936." evidence="4" ref="1">
    <original>D</original>
    <variation>G</variation>
    <location>
        <position position="184"/>
    </location>
</feature>
<feature type="sequence conflict" description="In Ref. 1." evidence="4" ref="1">
    <original>RFRKTKKGKKRKKEKKKRV</original>
    <variation>KVPENKKEM</variation>
    <location>
        <begin position="209"/>
        <end position="227"/>
    </location>
</feature>
<feature type="sequence conflict" description="In Ref. 1; AAA47936." evidence="4" ref="1">
    <original>S</original>
    <variation>N</variation>
    <location>
        <position position="231"/>
    </location>
</feature>
<feature type="sequence conflict" description="In Ref. 1; AAA47936." evidence="4" ref="1">
    <original>LKV</original>
    <variation>FKI</variation>
    <location>
        <begin position="245"/>
        <end position="247"/>
    </location>
</feature>
<protein>
    <recommendedName>
        <fullName>Movement protein</fullName>
    </recommendedName>
    <alternativeName>
        <fullName>28.5 kDa protein</fullName>
    </alternativeName>
    <alternativeName>
        <fullName>Cell-to-cell transport protein</fullName>
    </alternativeName>
</protein>
<name>MVP_TMGMV</name>
<dbReference type="EMBL" id="M34077">
    <property type="protein sequence ID" value="AAA47936.1"/>
    <property type="molecule type" value="Genomic_RNA"/>
</dbReference>
<dbReference type="EMBL" id="M34236">
    <property type="protein sequence ID" value="AAA47938.1"/>
    <property type="molecule type" value="Genomic_RNA"/>
</dbReference>
<dbReference type="PIR" id="B35520">
    <property type="entry name" value="WMTMU2"/>
</dbReference>
<dbReference type="RefSeq" id="NP_062915.1">
    <property type="nucleotide sequence ID" value="NC_001556.1"/>
</dbReference>
<dbReference type="KEGG" id="vg:1494076"/>
<dbReference type="OrthoDB" id="8677at10239"/>
<dbReference type="Proteomes" id="UP000000281">
    <property type="component" value="Genome"/>
</dbReference>
<dbReference type="GO" id="GO:0030430">
    <property type="term" value="C:host cell cytoplasm"/>
    <property type="evidence" value="ECO:0007669"/>
    <property type="project" value="UniProtKB-KW"/>
</dbReference>
<dbReference type="GO" id="GO:0044219">
    <property type="term" value="C:host cell plasmodesma"/>
    <property type="evidence" value="ECO:0007669"/>
    <property type="project" value="UniProtKB-SubCell"/>
</dbReference>
<dbReference type="GO" id="GO:0044163">
    <property type="term" value="C:host cytoskeleton"/>
    <property type="evidence" value="ECO:0007669"/>
    <property type="project" value="UniProtKB-SubCell"/>
</dbReference>
<dbReference type="GO" id="GO:0003723">
    <property type="term" value="F:RNA binding"/>
    <property type="evidence" value="ECO:0007669"/>
    <property type="project" value="UniProtKB-KW"/>
</dbReference>
<dbReference type="GO" id="GO:0046740">
    <property type="term" value="P:transport of virus in host, cell to cell"/>
    <property type="evidence" value="ECO:0007669"/>
    <property type="project" value="UniProtKB-KW"/>
</dbReference>
<dbReference type="InterPro" id="IPR001022">
    <property type="entry name" value="TMV_movement"/>
</dbReference>
<dbReference type="InterPro" id="IPR028919">
    <property type="entry name" value="Viral_movement"/>
</dbReference>
<dbReference type="Pfam" id="PF01107">
    <property type="entry name" value="MP"/>
    <property type="match status" value="1"/>
</dbReference>
<dbReference type="PRINTS" id="PR00964">
    <property type="entry name" value="MOVEMENT"/>
</dbReference>
<gene>
    <name type="primary">MP</name>
</gene>
<proteinExistence type="inferred from homology"/>
<sequence length="266" mass="29711">MAVSLRDTVKISEFINLSKQDEILPAFMTKVKSVRISTVDKIMAVKNDSLSDVDLLKGVKLVKNGYVCLAGLVVSGEWNLPDNCRGGVSVCIVDKRMKRSNEATLGAYHAPACKKNFSFKLIPNYSITSEDAEKNPWQVLVNIKGVAMEEGYCPLSLEFVSICVVHKNNVKKGLRERILRVTDDSPIELTEKVVEEFVDEVPMAVKLERFRKTKKGKKRKKEKKKRVVGNSVNNKKINNSGKKGLKVEEIEDNVSDDESIASSSTF</sequence>
<reference key="1">
    <citation type="journal article" date="1990" name="Virology">
        <title>The complete nucleotide sequence of the genomic RNA of the tobamovirus tobacco mild green mosaic virus.</title>
        <authorList>
            <person name="Solis I."/>
            <person name="Garcia-Arenal F."/>
        </authorList>
    </citation>
    <scope>NUCLEOTIDE SEQUENCE [GENOMIC RNA]</scope>
</reference>
<reference key="2">
    <citation type="journal article" date="1991" name="Virology">
        <title>Transfer of the movement protein gene between two tobamoviruses: influence on local lesion development.</title>
        <authorList>
            <person name="Nejidat A."/>
            <person name="Cellier F."/>
            <person name="Holt C.A."/>
            <person name="Gafny R."/>
            <person name="Eggenberger A.L."/>
            <person name="Beachy R.N."/>
        </authorList>
    </citation>
    <scope>NUCLEOTIDE SEQUENCE [GENOMIC RNA]</scope>
</reference>
<accession>P18338</accession>
<accession>Q88597</accession>
<organism>
    <name type="scientific">Tobacco mild green mosaic virus</name>
    <name type="common">TMGMV</name>
    <name type="synonym">TMV strain U2</name>
    <dbReference type="NCBI Taxonomy" id="12241"/>
    <lineage>
        <taxon>Viruses</taxon>
        <taxon>Riboviria</taxon>
        <taxon>Orthornavirae</taxon>
        <taxon>Kitrinoviricota</taxon>
        <taxon>Alsuviricetes</taxon>
        <taxon>Martellivirales</taxon>
        <taxon>Virgaviridae</taxon>
        <taxon>Tobamovirus</taxon>
    </lineage>
</organism>
<comment type="function">
    <text evidence="1 2">Transports viral genome to neighboring plant cells directly through plasmosdesmata, without any budding. The movement protein allows efficient cell to cell propagation, by bypassing the host cell wall barrier. Forms a ribonucleoprotein complex with viral RNA. Binds microtubules and modulates microtubule stability. Can bind double-stranded DNA.</text>
</comment>
<comment type="subcellular location">
    <subcellularLocation>
        <location evidence="2">Host cytoplasm</location>
        <location evidence="2">Host cytoskeleton</location>
    </subcellularLocation>
    <subcellularLocation>
        <location evidence="2">Host cell junction</location>
        <location evidence="2">Host plasmodesma</location>
    </subcellularLocation>
</comment>
<comment type="similarity">
    <text evidence="4">Belongs to the tobamovirus movement protein family.</text>
</comment>